<feature type="chain" id="PRO_0000286815" description="Protein FAM83A">
    <location>
        <begin position="1"/>
        <end position="443"/>
    </location>
</feature>
<feature type="region of interest" description="Disordered" evidence="2">
    <location>
        <begin position="311"/>
        <end position="403"/>
    </location>
</feature>
<feature type="compositionally biased region" description="Polar residues" evidence="2">
    <location>
        <begin position="315"/>
        <end position="326"/>
    </location>
</feature>
<feature type="compositionally biased region" description="Low complexity" evidence="2">
    <location>
        <begin position="327"/>
        <end position="344"/>
    </location>
</feature>
<feature type="compositionally biased region" description="Low complexity" evidence="2">
    <location>
        <begin position="388"/>
        <end position="399"/>
    </location>
</feature>
<keyword id="KW-0963">Cytoplasm</keyword>
<keyword id="KW-1185">Reference proteome</keyword>
<organism>
    <name type="scientific">Xenopus laevis</name>
    <name type="common">African clawed frog</name>
    <dbReference type="NCBI Taxonomy" id="8355"/>
    <lineage>
        <taxon>Eukaryota</taxon>
        <taxon>Metazoa</taxon>
        <taxon>Chordata</taxon>
        <taxon>Craniata</taxon>
        <taxon>Vertebrata</taxon>
        <taxon>Euteleostomi</taxon>
        <taxon>Amphibia</taxon>
        <taxon>Batrachia</taxon>
        <taxon>Anura</taxon>
        <taxon>Pipoidea</taxon>
        <taxon>Pipidae</taxon>
        <taxon>Xenopodinae</taxon>
        <taxon>Xenopus</taxon>
        <taxon>Xenopus</taxon>
    </lineage>
</organism>
<evidence type="ECO:0000250" key="1">
    <source>
        <dbReference type="UniProtKB" id="Q86UY5"/>
    </source>
</evidence>
<evidence type="ECO:0000256" key="2">
    <source>
        <dbReference type="SAM" id="MobiDB-lite"/>
    </source>
</evidence>
<evidence type="ECO:0000305" key="3"/>
<dbReference type="EMBL" id="BC057736">
    <property type="protein sequence ID" value="AAH57736.1"/>
    <property type="molecule type" value="mRNA"/>
</dbReference>
<dbReference type="RefSeq" id="NP_001079963.1">
    <property type="nucleotide sequence ID" value="NM_001086494.1"/>
</dbReference>
<dbReference type="SMR" id="Q6PF42"/>
<dbReference type="DNASU" id="379654"/>
<dbReference type="GeneID" id="379654"/>
<dbReference type="KEGG" id="xla:379654"/>
<dbReference type="AGR" id="Xenbase:XB-GENE-947624"/>
<dbReference type="CTD" id="379654"/>
<dbReference type="Xenbase" id="XB-GENE-947624">
    <property type="gene designation" value="fam83a.L"/>
</dbReference>
<dbReference type="OMA" id="YSFSWLC"/>
<dbReference type="OrthoDB" id="9905385at2759"/>
<dbReference type="Proteomes" id="UP000186698">
    <property type="component" value="Chromosome 6L"/>
</dbReference>
<dbReference type="Bgee" id="379654">
    <property type="expression patterns" value="Expressed in zone of skin and 9 other cell types or tissues"/>
</dbReference>
<dbReference type="GO" id="GO:0005737">
    <property type="term" value="C:cytoplasm"/>
    <property type="evidence" value="ECO:0007669"/>
    <property type="project" value="UniProtKB-SubCell"/>
</dbReference>
<dbReference type="GO" id="GO:0019901">
    <property type="term" value="F:protein kinase binding"/>
    <property type="evidence" value="ECO:0000318"/>
    <property type="project" value="GO_Central"/>
</dbReference>
<dbReference type="GO" id="GO:0008283">
    <property type="term" value="P:cell population proliferation"/>
    <property type="evidence" value="ECO:0000250"/>
    <property type="project" value="UniProtKB"/>
</dbReference>
<dbReference type="GO" id="GO:0007173">
    <property type="term" value="P:epidermal growth factor receptor signaling pathway"/>
    <property type="evidence" value="ECO:0000250"/>
    <property type="project" value="UniProtKB"/>
</dbReference>
<dbReference type="CDD" id="cd09181">
    <property type="entry name" value="PLDc_FAM83A_N"/>
    <property type="match status" value="1"/>
</dbReference>
<dbReference type="FunFam" id="3.30.870.10:FF:000004">
    <property type="entry name" value="protein FAM83H isoform X2"/>
    <property type="match status" value="1"/>
</dbReference>
<dbReference type="Gene3D" id="3.30.870.10">
    <property type="entry name" value="Endonuclease Chain A"/>
    <property type="match status" value="1"/>
</dbReference>
<dbReference type="InterPro" id="IPR050944">
    <property type="entry name" value="FAM83"/>
</dbReference>
<dbReference type="InterPro" id="IPR012461">
    <property type="entry name" value="SACK1"/>
</dbReference>
<dbReference type="PANTHER" id="PTHR16181">
    <property type="entry name" value="PROTEIN FAM83A-RELATED"/>
    <property type="match status" value="1"/>
</dbReference>
<dbReference type="PANTHER" id="PTHR16181:SF29">
    <property type="entry name" value="PROTEIN FAM83A-RELATED"/>
    <property type="match status" value="1"/>
</dbReference>
<dbReference type="Pfam" id="PF07894">
    <property type="entry name" value="SACK1"/>
    <property type="match status" value="1"/>
</dbReference>
<dbReference type="SUPFAM" id="SSF56024">
    <property type="entry name" value="Phospholipase D/nuclease"/>
    <property type="match status" value="1"/>
</dbReference>
<gene>
    <name evidence="1" type="primary">fam83a</name>
</gene>
<name>FA83A_XENLA</name>
<proteinExistence type="evidence at transcript level"/>
<accession>Q6PF42</accession>
<reference key="1">
    <citation type="submission" date="2003-09" db="EMBL/GenBank/DDBJ databases">
        <authorList>
            <consortium name="NIH - Xenopus Gene Collection (XGC) project"/>
        </authorList>
    </citation>
    <scope>NUCLEOTIDE SEQUENCE [LARGE SCALE MRNA]</scope>
    <source>
        <tissue>Embryo</tissue>
    </source>
</reference>
<protein>
    <recommendedName>
        <fullName evidence="3">Protein FAM83A</fullName>
    </recommendedName>
</protein>
<comment type="function">
    <text evidence="1">May function in the epidermal growth factor receptor/EGFR signaling pathway.</text>
</comment>
<comment type="subcellular location">
    <subcellularLocation>
        <location evidence="1">Cytoplasm</location>
    </subcellularLocation>
</comment>
<comment type="similarity">
    <text evidence="3">Belongs to the FAM83 family.</text>
</comment>
<sequence>MNRSKTFGKIRKRLEEAKNKWARLCKVEYSYNESARLATDALLDGGVEDYEKVLNEEGEVDFLSGDEIQYIMKNIKEPMYSNDNQTEGECGSAANGNKSECFYPMNSDKSEPVSTLHNWSAEEKPYLKDKSSATVYFQTDKTNNVRETIRRCIHRTTQVLAILMDEFTDAEIFCDVLEAANKRNIFVYLLLDANKLHLFTQMCEKLQVRDLHMKNISVRSVTGDVYCAKSGKKFAGQIHEKFIISDWRCVLSGSYSFTWLSGQVHRNFLYKFSGVVVELFDEEFRHLYGSSKPVMGLKSPAPMAPVLRREDSGVSVMTDSTPESVNTTSEPFSSTSTASISNDSQRPKSPESTDPVLASPPRSPVRSPLQRMNSLHGYPSLISPPPQSNYQPNYYQRNYAPDSPSSFFNNNANIYRSFRMRQDDFSTPRFNQGWSLFSRSTMT</sequence>